<proteinExistence type="predicted"/>
<evidence type="ECO:0000255" key="1"/>
<evidence type="ECO:0000256" key="2">
    <source>
        <dbReference type="SAM" id="MobiDB-lite"/>
    </source>
</evidence>
<accession>Q91FH8</accession>
<organismHost>
    <name type="scientific">Acheta domesticus</name>
    <name type="common">House cricket</name>
    <dbReference type="NCBI Taxonomy" id="6997"/>
</organismHost>
<organismHost>
    <name type="scientific">Chilo suppressalis</name>
    <name type="common">Asiatic rice borer moth</name>
    <dbReference type="NCBI Taxonomy" id="168631"/>
</organismHost>
<organismHost>
    <name type="scientific">Gryllus bimaculatus</name>
    <name type="common">Two-spotted cricket</name>
    <dbReference type="NCBI Taxonomy" id="6999"/>
</organismHost>
<organismHost>
    <name type="scientific">Gryllus campestris</name>
    <dbReference type="NCBI Taxonomy" id="58607"/>
</organismHost>
<organismHost>
    <name type="scientific">Spodoptera frugiperda</name>
    <name type="common">Fall armyworm</name>
    <dbReference type="NCBI Taxonomy" id="7108"/>
</organismHost>
<dbReference type="EMBL" id="AF303741">
    <property type="protein sequence ID" value="AAK82207.1"/>
    <property type="molecule type" value="Genomic_DNA"/>
</dbReference>
<dbReference type="RefSeq" id="NP_149809.1">
    <property type="nucleotide sequence ID" value="NC_003038.1"/>
</dbReference>
<dbReference type="SMR" id="Q91FH8"/>
<dbReference type="KEGG" id="vg:1733163"/>
<dbReference type="Proteomes" id="UP000001359">
    <property type="component" value="Genome"/>
</dbReference>
<organism>
    <name type="scientific">Invertebrate iridescent virus 6</name>
    <name type="common">IIV-6</name>
    <name type="synonym">Chilo iridescent virus</name>
    <dbReference type="NCBI Taxonomy" id="176652"/>
    <lineage>
        <taxon>Viruses</taxon>
        <taxon>Varidnaviria</taxon>
        <taxon>Bamfordvirae</taxon>
        <taxon>Nucleocytoviricota</taxon>
        <taxon>Megaviricetes</taxon>
        <taxon>Pimascovirales</taxon>
        <taxon>Iridoviridae</taxon>
        <taxon>Betairidovirinae</taxon>
        <taxon>Iridovirus</taxon>
    </lineage>
</organism>
<gene>
    <name type="ORF">IIV6-346R</name>
</gene>
<protein>
    <recommendedName>
        <fullName>Uncharacterized protein 346R</fullName>
    </recommendedName>
</protein>
<feature type="chain" id="PRO_0000377864" description="Uncharacterized protein 346R">
    <location>
        <begin position="1"/>
        <end position="69"/>
    </location>
</feature>
<feature type="region of interest" description="Disordered" evidence="2">
    <location>
        <begin position="21"/>
        <end position="42"/>
    </location>
</feature>
<feature type="coiled-coil region" evidence="1">
    <location>
        <begin position="35"/>
        <end position="69"/>
    </location>
</feature>
<reference key="1">
    <citation type="journal article" date="2001" name="Virology">
        <title>Analysis of the first complete DNA sequence of an invertebrate iridovirus: coding strategy of the genome of Chilo iridescent virus.</title>
        <authorList>
            <person name="Jakob N.J."/>
            <person name="Mueller K."/>
            <person name="Bahr U."/>
            <person name="Darai G."/>
        </authorList>
    </citation>
    <scope>NUCLEOTIDE SEQUENCE [LARGE SCALE GENOMIC DNA]</scope>
</reference>
<reference key="2">
    <citation type="journal article" date="2007" name="Virol. J.">
        <title>Comparative genomic analysis of the family Iridoviridae: re-annotating and defining the core set of iridovirus genes.</title>
        <authorList>
            <person name="Eaton H.E."/>
            <person name="Metcalf J."/>
            <person name="Penny E."/>
            <person name="Tcherepanov V."/>
            <person name="Upton C."/>
            <person name="Brunetti C.R."/>
        </authorList>
    </citation>
    <scope>GENOME REANNOTATION</scope>
</reference>
<sequence>MNRKYNFNDESSMSPQAKAAMYAANKKSDARRRGKVGKEQWEKEMEQYNIQKAQFEKELKEKKEKELKK</sequence>
<name>346R_IIV6</name>
<keyword id="KW-0175">Coiled coil</keyword>
<keyword id="KW-1185">Reference proteome</keyword>